<reference key="1">
    <citation type="journal article" date="2004" name="Proc. Natl. Acad. Sci. U.S.A.">
        <title>Insights into the evolution of Yersinia pestis through whole-genome comparison with Yersinia pseudotuberculosis.</title>
        <authorList>
            <person name="Chain P.S.G."/>
            <person name="Carniel E."/>
            <person name="Larimer F.W."/>
            <person name="Lamerdin J."/>
            <person name="Stoutland P.O."/>
            <person name="Regala W.M."/>
            <person name="Georgescu A.M."/>
            <person name="Vergez L.M."/>
            <person name="Land M.L."/>
            <person name="Motin V.L."/>
            <person name="Brubaker R.R."/>
            <person name="Fowler J."/>
            <person name="Hinnebusch J."/>
            <person name="Marceau M."/>
            <person name="Medigue C."/>
            <person name="Simonet M."/>
            <person name="Chenal-Francisque V."/>
            <person name="Souza B."/>
            <person name="Dacheux D."/>
            <person name="Elliott J.M."/>
            <person name="Derbise A."/>
            <person name="Hauser L.J."/>
            <person name="Garcia E."/>
        </authorList>
    </citation>
    <scope>NUCLEOTIDE SEQUENCE [LARGE SCALE GENOMIC DNA]</scope>
    <source>
        <strain>IP32953</strain>
    </source>
</reference>
<name>TRUD_YERPS</name>
<sequence length="349" mass="39148">MDMENLTWLHGKPTASGILKANPEDFVVVEDLGFEPDGEGEHLLVRIRKNGCNTQFVADYLARFAKLHPRLVSYAGLKDRHAVTEQWFCLHLPGKEAPDLATFELEGCEVLEAVRHKRKLRIGSLKGNAFTLVLRHITDRQDVEQRLQQIAAQGVPNYFGSQRFGRGGNNLVQARLWANNEIRVKERSKRSFYLSASRSAMFNLISSHRLAQQLSTTVLEGDALQLSGRGSWFVAQADELATLQQRVTAGELNITAPLPGDSELGTHGEALAFEQACLAEQTELLSLIKRERVEGSRRAVLLKPQNMISNWWDDVTLELSFWLPAGSFATSVVREIMNQDRADDTDIIE</sequence>
<feature type="chain" id="PRO_0000152535" description="tRNA pseudouridine synthase D">
    <location>
        <begin position="1"/>
        <end position="349"/>
    </location>
</feature>
<feature type="domain" description="TRUD" evidence="1">
    <location>
        <begin position="154"/>
        <end position="302"/>
    </location>
</feature>
<feature type="active site" description="Nucleophile" evidence="1">
    <location>
        <position position="79"/>
    </location>
</feature>
<feature type="binding site" evidence="1">
    <location>
        <position position="26"/>
    </location>
    <ligand>
        <name>substrate</name>
    </ligand>
</feature>
<feature type="binding site" evidence="1">
    <location>
        <position position="128"/>
    </location>
    <ligand>
        <name>substrate</name>
    </ligand>
</feature>
<feature type="binding site" evidence="1">
    <location>
        <position position="328"/>
    </location>
    <ligand>
        <name>substrate</name>
    </ligand>
</feature>
<comment type="function">
    <text evidence="1">Responsible for synthesis of pseudouridine from uracil-13 in transfer RNAs.</text>
</comment>
<comment type="catalytic activity">
    <reaction evidence="1">
        <text>uridine(13) in tRNA = pseudouridine(13) in tRNA</text>
        <dbReference type="Rhea" id="RHEA:42540"/>
        <dbReference type="Rhea" id="RHEA-COMP:10105"/>
        <dbReference type="Rhea" id="RHEA-COMP:10106"/>
        <dbReference type="ChEBI" id="CHEBI:65314"/>
        <dbReference type="ChEBI" id="CHEBI:65315"/>
        <dbReference type="EC" id="5.4.99.27"/>
    </reaction>
</comment>
<comment type="similarity">
    <text evidence="1">Belongs to the pseudouridine synthase TruD family.</text>
</comment>
<keyword id="KW-0413">Isomerase</keyword>
<keyword id="KW-0819">tRNA processing</keyword>
<accession>Q66EC1</accession>
<gene>
    <name evidence="1" type="primary">truD</name>
    <name type="ordered locus">YPTB0772</name>
</gene>
<protein>
    <recommendedName>
        <fullName evidence="1">tRNA pseudouridine synthase D</fullName>
        <ecNumber evidence="1">5.4.99.27</ecNumber>
    </recommendedName>
    <alternativeName>
        <fullName evidence="1">tRNA pseudouridine(13) synthase</fullName>
    </alternativeName>
    <alternativeName>
        <fullName evidence="1">tRNA pseudouridylate synthase D</fullName>
    </alternativeName>
    <alternativeName>
        <fullName evidence="1">tRNA-uridine isomerase D</fullName>
    </alternativeName>
</protein>
<dbReference type="EC" id="5.4.99.27" evidence="1"/>
<dbReference type="EMBL" id="BX936398">
    <property type="protein sequence ID" value="CAH20012.1"/>
    <property type="molecule type" value="Genomic_DNA"/>
</dbReference>
<dbReference type="RefSeq" id="WP_011191777.1">
    <property type="nucleotide sequence ID" value="NC_006155.1"/>
</dbReference>
<dbReference type="SMR" id="Q66EC1"/>
<dbReference type="KEGG" id="ypo:BZ17_1784"/>
<dbReference type="KEGG" id="yps:YPTB0772"/>
<dbReference type="PATRIC" id="fig|273123.14.peg.1889"/>
<dbReference type="Proteomes" id="UP000001011">
    <property type="component" value="Chromosome"/>
</dbReference>
<dbReference type="GO" id="GO:0005829">
    <property type="term" value="C:cytosol"/>
    <property type="evidence" value="ECO:0007669"/>
    <property type="project" value="TreeGrafter"/>
</dbReference>
<dbReference type="GO" id="GO:0003723">
    <property type="term" value="F:RNA binding"/>
    <property type="evidence" value="ECO:0007669"/>
    <property type="project" value="InterPro"/>
</dbReference>
<dbReference type="GO" id="GO:0160150">
    <property type="term" value="F:tRNA pseudouridine(13) synthase activity"/>
    <property type="evidence" value="ECO:0007669"/>
    <property type="project" value="UniProtKB-EC"/>
</dbReference>
<dbReference type="GO" id="GO:0031119">
    <property type="term" value="P:tRNA pseudouridine synthesis"/>
    <property type="evidence" value="ECO:0007669"/>
    <property type="project" value="UniProtKB-UniRule"/>
</dbReference>
<dbReference type="CDD" id="cd02575">
    <property type="entry name" value="PseudoU_synth_EcTruD"/>
    <property type="match status" value="1"/>
</dbReference>
<dbReference type="FunFam" id="3.30.2340.10:FF:000001">
    <property type="entry name" value="tRNA pseudouridine synthase D"/>
    <property type="match status" value="1"/>
</dbReference>
<dbReference type="FunFam" id="3.30.2350.20:FF:000001">
    <property type="entry name" value="tRNA pseudouridine synthase D"/>
    <property type="match status" value="1"/>
</dbReference>
<dbReference type="Gene3D" id="3.30.2350.20">
    <property type="entry name" value="TruD, catalytic domain"/>
    <property type="match status" value="1"/>
</dbReference>
<dbReference type="Gene3D" id="3.30.2340.10">
    <property type="entry name" value="TruD, insertion domain"/>
    <property type="match status" value="1"/>
</dbReference>
<dbReference type="HAMAP" id="MF_01082">
    <property type="entry name" value="TruD"/>
    <property type="match status" value="1"/>
</dbReference>
<dbReference type="InterPro" id="IPR020103">
    <property type="entry name" value="PsdUridine_synth_cat_dom_sf"/>
</dbReference>
<dbReference type="InterPro" id="IPR001656">
    <property type="entry name" value="PsdUridine_synth_TruD"/>
</dbReference>
<dbReference type="InterPro" id="IPR020119">
    <property type="entry name" value="PsdUridine_synth_TruD_CS"/>
</dbReference>
<dbReference type="InterPro" id="IPR011760">
    <property type="entry name" value="PsdUridine_synth_TruD_insert"/>
</dbReference>
<dbReference type="InterPro" id="IPR042214">
    <property type="entry name" value="TruD_catalytic"/>
</dbReference>
<dbReference type="InterPro" id="IPR043165">
    <property type="entry name" value="TruD_insert_sf"/>
</dbReference>
<dbReference type="InterPro" id="IPR050170">
    <property type="entry name" value="TruD_pseudoU_synthase"/>
</dbReference>
<dbReference type="NCBIfam" id="NF002155">
    <property type="entry name" value="PRK00984.1-4"/>
    <property type="match status" value="1"/>
</dbReference>
<dbReference type="NCBIfam" id="TIGR00094">
    <property type="entry name" value="tRNA_TruD_broad"/>
    <property type="match status" value="1"/>
</dbReference>
<dbReference type="PANTHER" id="PTHR47811">
    <property type="entry name" value="TRNA PSEUDOURIDINE SYNTHASE D"/>
    <property type="match status" value="1"/>
</dbReference>
<dbReference type="PANTHER" id="PTHR47811:SF1">
    <property type="entry name" value="TRNA PSEUDOURIDINE SYNTHASE D"/>
    <property type="match status" value="1"/>
</dbReference>
<dbReference type="Pfam" id="PF01142">
    <property type="entry name" value="TruD"/>
    <property type="match status" value="2"/>
</dbReference>
<dbReference type="SUPFAM" id="SSF55120">
    <property type="entry name" value="Pseudouridine synthase"/>
    <property type="match status" value="1"/>
</dbReference>
<dbReference type="PROSITE" id="PS50984">
    <property type="entry name" value="TRUD"/>
    <property type="match status" value="1"/>
</dbReference>
<dbReference type="PROSITE" id="PS01268">
    <property type="entry name" value="UPF0024"/>
    <property type="match status" value="1"/>
</dbReference>
<evidence type="ECO:0000255" key="1">
    <source>
        <dbReference type="HAMAP-Rule" id="MF_01082"/>
    </source>
</evidence>
<proteinExistence type="inferred from homology"/>
<organism>
    <name type="scientific">Yersinia pseudotuberculosis serotype I (strain IP32953)</name>
    <dbReference type="NCBI Taxonomy" id="273123"/>
    <lineage>
        <taxon>Bacteria</taxon>
        <taxon>Pseudomonadati</taxon>
        <taxon>Pseudomonadota</taxon>
        <taxon>Gammaproteobacteria</taxon>
        <taxon>Enterobacterales</taxon>
        <taxon>Yersiniaceae</taxon>
        <taxon>Yersinia</taxon>
    </lineage>
</organism>